<evidence type="ECO:0000255" key="1">
    <source>
        <dbReference type="HAMAP-Rule" id="MF_01896"/>
    </source>
</evidence>
<organism>
    <name type="scientific">Enterobacter lignolyticus (strain SCF1)</name>
    <dbReference type="NCBI Taxonomy" id="701347"/>
    <lineage>
        <taxon>Bacteria</taxon>
        <taxon>Pseudomonadati</taxon>
        <taxon>Pseudomonadota</taxon>
        <taxon>Gammaproteobacteria</taxon>
        <taxon>Enterobacterales</taxon>
        <taxon>Enterobacteriaceae</taxon>
        <taxon>Pluralibacter</taxon>
    </lineage>
</organism>
<gene>
    <name evidence="1" type="primary">sbmC</name>
    <name type="ordered locus">Entcl_1682</name>
</gene>
<feature type="chain" id="PRO_0000409697" description="DNA gyrase inhibitor">
    <location>
        <begin position="1"/>
        <end position="157"/>
    </location>
</feature>
<comment type="function">
    <text evidence="1">Inhibits the supercoiling activity of DNA gyrase. Acts by inhibiting DNA gyrase at an early step, prior to (or at the step of) binding of DNA by the gyrase. It protects cells against toxins that target DNA gyrase, by inhibiting activity of these toxins and reducing the formation of lethal double-strand breaks in the cell.</text>
</comment>
<comment type="subunit">
    <text evidence="1">Interacts with DNA gyrase.</text>
</comment>
<comment type="subcellular location">
    <subcellularLocation>
        <location evidence="1">Cytoplasm</location>
    </subcellularLocation>
</comment>
<comment type="similarity">
    <text evidence="1">Belongs to the DNA gyrase inhibitor family.</text>
</comment>
<dbReference type="EMBL" id="CP002272">
    <property type="protein sequence ID" value="ADO47942.1"/>
    <property type="molecule type" value="Genomic_DNA"/>
</dbReference>
<dbReference type="RefSeq" id="WP_013365686.1">
    <property type="nucleotide sequence ID" value="NC_014618.1"/>
</dbReference>
<dbReference type="SMR" id="E3G128"/>
<dbReference type="STRING" id="701347.Entcl_1682"/>
<dbReference type="KEGG" id="esc:Entcl_1682"/>
<dbReference type="eggNOG" id="COG3449">
    <property type="taxonomic scope" value="Bacteria"/>
</dbReference>
<dbReference type="HOGENOM" id="CLU_113664_3_2_6"/>
<dbReference type="Proteomes" id="UP000006872">
    <property type="component" value="Chromosome"/>
</dbReference>
<dbReference type="GO" id="GO:0005737">
    <property type="term" value="C:cytoplasm"/>
    <property type="evidence" value="ECO:0007669"/>
    <property type="project" value="UniProtKB-SubCell"/>
</dbReference>
<dbReference type="GO" id="GO:0008657">
    <property type="term" value="F:DNA topoisomerase type II (double strand cut, ATP-hydrolyzing) inhibitor activity"/>
    <property type="evidence" value="ECO:0007669"/>
    <property type="project" value="UniProtKB-UniRule"/>
</dbReference>
<dbReference type="Gene3D" id="3.20.80.10">
    <property type="entry name" value="Regulatory factor, effector binding domain"/>
    <property type="match status" value="1"/>
</dbReference>
<dbReference type="HAMAP" id="MF_01896">
    <property type="entry name" value="DNA_gyrase_inhibitor"/>
    <property type="match status" value="1"/>
</dbReference>
<dbReference type="InterPro" id="IPR010499">
    <property type="entry name" value="AraC_E-bd"/>
</dbReference>
<dbReference type="InterPro" id="IPR050908">
    <property type="entry name" value="DNA_gyrase_inhibitor"/>
</dbReference>
<dbReference type="InterPro" id="IPR024911">
    <property type="entry name" value="DNA_gyrase_inhibitor_GyrI"/>
</dbReference>
<dbReference type="InterPro" id="IPR029442">
    <property type="entry name" value="GyrI-like"/>
</dbReference>
<dbReference type="InterPro" id="IPR011256">
    <property type="entry name" value="Reg_factor_effector_dom_sf"/>
</dbReference>
<dbReference type="NCBIfam" id="NF007451">
    <property type="entry name" value="PRK10016.1"/>
    <property type="match status" value="1"/>
</dbReference>
<dbReference type="PANTHER" id="PTHR40055:SF2">
    <property type="entry name" value="DNA GYRASE INHIBITOR"/>
    <property type="match status" value="1"/>
</dbReference>
<dbReference type="PANTHER" id="PTHR40055">
    <property type="entry name" value="TRANSCRIPTIONAL REGULATOR YGIV-RELATED"/>
    <property type="match status" value="1"/>
</dbReference>
<dbReference type="Pfam" id="PF06445">
    <property type="entry name" value="GyrI-like"/>
    <property type="match status" value="1"/>
</dbReference>
<dbReference type="SMART" id="SM00871">
    <property type="entry name" value="AraC_E_bind"/>
    <property type="match status" value="1"/>
</dbReference>
<dbReference type="SUPFAM" id="SSF55136">
    <property type="entry name" value="Probable bacterial effector-binding domain"/>
    <property type="match status" value="1"/>
</dbReference>
<keyword id="KW-0963">Cytoplasm</keyword>
<keyword id="KW-1185">Reference proteome</keyword>
<keyword id="KW-0346">Stress response</keyword>
<sequence length="157" mass="17900">MEYSIRQEQQRVVAGFHMVGPWEQTVKQGFEQLMMWVDGRDIPAKEWLAVYYDNPDEVPAEKLRCDTVVTVEPGFQIPANSEGVMLTQVSGGEYAVASARVVNHDFATPWYQFFGSVLADTAWEMAAKPCFERYLNDGNQDGYWDIEMYIAVSRRAG</sequence>
<reference key="1">
    <citation type="journal article" date="2011" name="Stand. Genomic Sci.">
        <title>Complete genome sequence of 'Enterobacter lignolyticus' SCF1.</title>
        <authorList>
            <person name="Deangelis K.M."/>
            <person name="D'Haeseleer P."/>
            <person name="Chivian D."/>
            <person name="Fortney J.L."/>
            <person name="Khudyakov J."/>
            <person name="Simmons B."/>
            <person name="Woo H."/>
            <person name="Arkin A.P."/>
            <person name="Davenport K.W."/>
            <person name="Goodwin L."/>
            <person name="Chen A."/>
            <person name="Ivanova N."/>
            <person name="Kyrpides N.C."/>
            <person name="Mavromatis K."/>
            <person name="Woyke T."/>
            <person name="Hazen T.C."/>
        </authorList>
    </citation>
    <scope>NUCLEOTIDE SEQUENCE [LARGE SCALE GENOMIC DNA]</scope>
    <source>
        <strain>SCF1</strain>
    </source>
</reference>
<accession>E3G128</accession>
<protein>
    <recommendedName>
        <fullName evidence="1">DNA gyrase inhibitor</fullName>
    </recommendedName>
</protein>
<proteinExistence type="inferred from homology"/>
<name>SBMC_ENTLS</name>